<keyword id="KW-0031">Aminopeptidase</keyword>
<keyword id="KW-0963">Cytoplasm</keyword>
<keyword id="KW-0903">Direct protein sequencing</keyword>
<keyword id="KW-0378">Hydrolase</keyword>
<keyword id="KW-0479">Metal-binding</keyword>
<keyword id="KW-0482">Metalloprotease</keyword>
<keyword id="KW-0645">Protease</keyword>
<keyword id="KW-0862">Zinc</keyword>
<sequence length="849" mass="96565">MTASVARFIESFIPENYNLFLDINRSEKTFTGNVAITGEAIDNHISLHQKDLTINSVLLDNESLNFQMDDANEAFHIELPETGVLTIFIEFSGRITDNMTGIYPSYYTYNGEKKEIISTQFEISHFAREAFPCVDEPEAKATFDLSLKFDAEEGDTALSNMPEINSHLREETGVWTFETTPRMSTYLLAFGFGALHGKTAKTKNGTEVGVFATVAQAENSFDFALDIAVRVIEFYEDYFQVKYPIPLSYHLALPDFSAGAMENWGLVTYREVYLLVDENSSAASRQQVALVVAHELAHQWFGNLVTMKWWDDLWLNESFANMMEYVSVNAIEPSWNIFEGFPNKLGVPNALQRDATDGVQSVHMEVSHPDEINTLFDSAIVYAKGSRLMHMLRRWLGDEAFAKGLKAYFEKHQYNNTVGRDLWNALSEASGKDVSSFMDTWLEQPGYPVVSAEVVDDTLILSQKQFFIGEHEDKGRLWEIPLNTNWNGLPDTLSGERIEIPNYSQLATENNGVLRLNTANTAHYITDYQGQLLDNILEDFANLDTVSKLQILQERRLLAESGRISYASLVGLLDLVEKEESFFLISQAKSQILAGLKRFIDEDTEAEVHYKALVRRQFQNDFERLGFDAKEGESDEDEMVRQTALSYLIEADYQPTVLAAANVFQAHKENIESIPASIRGLVLINQMKQENSLSLVEEYINAYVATNDSNFRRQLTQALSYLKNQEGLDYVLGQLKDKNVVKPQDLYLWYMNFLSKSFAQETVWDWAKENWEWIKAALGGDMSFDSFVNIPAGIFKNQERLDQYIAFFEPQTSDKALERNILMGIKTIAARVDLIEKEKAAVESALKDY</sequence>
<protein>
    <recommendedName>
        <fullName>Aminopeptidase N</fullName>
        <ecNumber>3.4.11.2</ecNumber>
    </recommendedName>
    <alternativeName>
        <fullName>Alanine aminopeptidase</fullName>
    </alternativeName>
    <alternativeName>
        <fullName>Lysyl aminopeptidase</fullName>
        <shortName>Lys-AP</shortName>
    </alternativeName>
</protein>
<dbReference type="EC" id="3.4.11.2"/>
<dbReference type="EMBL" id="D38040">
    <property type="protein sequence ID" value="BAA07234.1"/>
    <property type="molecule type" value="Genomic_DNA"/>
</dbReference>
<dbReference type="PIR" id="JU0191">
    <property type="entry name" value="JU0191"/>
</dbReference>
<dbReference type="SMR" id="Q48656"/>
<dbReference type="MEROPS" id="M01.002"/>
<dbReference type="GO" id="GO:0005737">
    <property type="term" value="C:cytoplasm"/>
    <property type="evidence" value="ECO:0007669"/>
    <property type="project" value="UniProtKB-SubCell"/>
</dbReference>
<dbReference type="GO" id="GO:0005615">
    <property type="term" value="C:extracellular space"/>
    <property type="evidence" value="ECO:0007669"/>
    <property type="project" value="TreeGrafter"/>
</dbReference>
<dbReference type="GO" id="GO:0016020">
    <property type="term" value="C:membrane"/>
    <property type="evidence" value="ECO:0007669"/>
    <property type="project" value="TreeGrafter"/>
</dbReference>
<dbReference type="GO" id="GO:0016285">
    <property type="term" value="F:alanyl aminopeptidase activity"/>
    <property type="evidence" value="ECO:0007669"/>
    <property type="project" value="UniProtKB-EC"/>
</dbReference>
<dbReference type="GO" id="GO:0070006">
    <property type="term" value="F:metalloaminopeptidase activity"/>
    <property type="evidence" value="ECO:0007669"/>
    <property type="project" value="TreeGrafter"/>
</dbReference>
<dbReference type="GO" id="GO:0042277">
    <property type="term" value="F:peptide binding"/>
    <property type="evidence" value="ECO:0007669"/>
    <property type="project" value="TreeGrafter"/>
</dbReference>
<dbReference type="GO" id="GO:0008270">
    <property type="term" value="F:zinc ion binding"/>
    <property type="evidence" value="ECO:0007669"/>
    <property type="project" value="InterPro"/>
</dbReference>
<dbReference type="GO" id="GO:0043171">
    <property type="term" value="P:peptide catabolic process"/>
    <property type="evidence" value="ECO:0007669"/>
    <property type="project" value="TreeGrafter"/>
</dbReference>
<dbReference type="GO" id="GO:0006508">
    <property type="term" value="P:proteolysis"/>
    <property type="evidence" value="ECO:0007669"/>
    <property type="project" value="UniProtKB-KW"/>
</dbReference>
<dbReference type="CDD" id="cd09601">
    <property type="entry name" value="M1_APN-Q_like"/>
    <property type="match status" value="1"/>
</dbReference>
<dbReference type="FunFam" id="1.10.390.10:FF:000013">
    <property type="entry name" value="Aminopeptidase N"/>
    <property type="match status" value="1"/>
</dbReference>
<dbReference type="Gene3D" id="1.25.50.20">
    <property type="match status" value="1"/>
</dbReference>
<dbReference type="Gene3D" id="2.60.40.1910">
    <property type="match status" value="1"/>
</dbReference>
<dbReference type="Gene3D" id="1.10.390.10">
    <property type="entry name" value="Neutral Protease Domain 2"/>
    <property type="match status" value="1"/>
</dbReference>
<dbReference type="Gene3D" id="2.60.40.1730">
    <property type="entry name" value="tricorn interacting facor f3 domain"/>
    <property type="match status" value="1"/>
</dbReference>
<dbReference type="InterPro" id="IPR045357">
    <property type="entry name" value="Aminopeptidase_N-like_N"/>
</dbReference>
<dbReference type="InterPro" id="IPR042097">
    <property type="entry name" value="Aminopeptidase_N-like_N_sf"/>
</dbReference>
<dbReference type="InterPro" id="IPR024571">
    <property type="entry name" value="ERAP1-like_C_dom"/>
</dbReference>
<dbReference type="InterPro" id="IPR034016">
    <property type="entry name" value="M1_APN-typ"/>
</dbReference>
<dbReference type="InterPro" id="IPR001930">
    <property type="entry name" value="Peptidase_M1"/>
</dbReference>
<dbReference type="InterPro" id="IPR050344">
    <property type="entry name" value="Peptidase_M1_aminopeptidases"/>
</dbReference>
<dbReference type="InterPro" id="IPR014782">
    <property type="entry name" value="Peptidase_M1_dom"/>
</dbReference>
<dbReference type="InterPro" id="IPR027268">
    <property type="entry name" value="Peptidase_M4/M1_CTD_sf"/>
</dbReference>
<dbReference type="PANTHER" id="PTHR11533">
    <property type="entry name" value="PROTEASE M1 ZINC METALLOPROTEASE"/>
    <property type="match status" value="1"/>
</dbReference>
<dbReference type="PANTHER" id="PTHR11533:SF174">
    <property type="entry name" value="PUROMYCIN-SENSITIVE AMINOPEPTIDASE-RELATED"/>
    <property type="match status" value="1"/>
</dbReference>
<dbReference type="Pfam" id="PF11838">
    <property type="entry name" value="ERAP1_C"/>
    <property type="match status" value="1"/>
</dbReference>
<dbReference type="Pfam" id="PF01433">
    <property type="entry name" value="Peptidase_M1"/>
    <property type="match status" value="1"/>
</dbReference>
<dbReference type="Pfam" id="PF17900">
    <property type="entry name" value="Peptidase_M1_N"/>
    <property type="match status" value="1"/>
</dbReference>
<dbReference type="PRINTS" id="PR00756">
    <property type="entry name" value="ALADIPTASE"/>
</dbReference>
<dbReference type="SUPFAM" id="SSF63737">
    <property type="entry name" value="Leukotriene A4 hydrolase N-terminal domain"/>
    <property type="match status" value="1"/>
</dbReference>
<dbReference type="SUPFAM" id="SSF55486">
    <property type="entry name" value="Metalloproteases ('zincins'), catalytic domain"/>
    <property type="match status" value="1"/>
</dbReference>
<dbReference type="PROSITE" id="PS00142">
    <property type="entry name" value="ZINC_PROTEASE"/>
    <property type="match status" value="1"/>
</dbReference>
<reference key="1">
    <citation type="submission" date="1996-04" db="EMBL/GenBank/DDBJ databases">
        <title>Cloning of lysyl-aminopeptidase gene from Lactococcus lactis.</title>
        <authorList>
            <person name="Tsukasaki F."/>
            <person name="Motoshima H."/>
            <person name="Minagawa E."/>
            <person name="Kaminogawa S."/>
        </authorList>
    </citation>
    <scope>NUCLEOTIDE SEQUENCE [GENOMIC DNA]</scope>
    <scope>PARTIAL PROTEIN SEQUENCE</scope>
    <source>
        <strain>YRC001</strain>
    </source>
</reference>
<accession>Q48656</accession>
<proteinExistence type="evidence at protein level"/>
<comment type="function">
    <text>Aminopeptidase with broad substrate specificity to several peptides. It has more affinity for oligopeptides than for dipeptides. It plays an essential role in the metabolism, it may be involved in nitrogen supply or protein turnover.</text>
</comment>
<comment type="catalytic activity">
    <reaction>
        <text>Release of an N-terminal amino acid, Xaa-|-Yaa- from a peptide, amide or arylamide. Xaa is preferably Ala, but may be most amino acids including Pro (slow action). When a terminal hydrophobic residue is followed by a prolyl residue, the two may be released as an intact Xaa-Pro dipeptide.</text>
        <dbReference type="EC" id="3.4.11.2"/>
    </reaction>
</comment>
<comment type="cofactor">
    <cofactor evidence="1">
        <name>Zn(2+)</name>
        <dbReference type="ChEBI" id="CHEBI:29105"/>
    </cofactor>
    <text evidence="1">Binds 1 zinc ion per subunit.</text>
</comment>
<comment type="subunit">
    <text>Monomer.</text>
</comment>
<comment type="subcellular location">
    <subcellularLocation>
        <location>Cytoplasm</location>
    </subcellularLocation>
    <text>It may be secreted through an unknown mechanism.</text>
</comment>
<comment type="similarity">
    <text evidence="3">Belongs to the peptidase M1 family.</text>
</comment>
<gene>
    <name type="primary">pepN</name>
</gene>
<name>AMPN_LACLL</name>
<feature type="initiator methionine" description="Removed">
    <location>
        <position position="1"/>
    </location>
</feature>
<feature type="chain" id="PRO_0000095074" description="Aminopeptidase N">
    <location>
        <begin position="2"/>
        <end position="849"/>
    </location>
</feature>
<feature type="active site" description="Proton acceptor" evidence="2">
    <location>
        <position position="295"/>
    </location>
</feature>
<feature type="binding site" evidence="1">
    <location>
        <position position="122"/>
    </location>
    <ligand>
        <name>substrate</name>
    </ligand>
</feature>
<feature type="binding site" evidence="1">
    <location>
        <begin position="259"/>
        <end position="263"/>
    </location>
    <ligand>
        <name>substrate</name>
    </ligand>
</feature>
<feature type="binding site" evidence="2">
    <location>
        <position position="294"/>
    </location>
    <ligand>
        <name>Zn(2+)</name>
        <dbReference type="ChEBI" id="CHEBI:29105"/>
        <note>catalytic</note>
    </ligand>
</feature>
<feature type="binding site" evidence="2">
    <location>
        <position position="298"/>
    </location>
    <ligand>
        <name>Zn(2+)</name>
        <dbReference type="ChEBI" id="CHEBI:29105"/>
        <note>catalytic</note>
    </ligand>
</feature>
<feature type="binding site" evidence="2">
    <location>
        <position position="317"/>
    </location>
    <ligand>
        <name>Zn(2+)</name>
        <dbReference type="ChEBI" id="CHEBI:29105"/>
        <note>catalytic</note>
    </ligand>
</feature>
<feature type="site" description="Transition state stabilizer" evidence="1">
    <location>
        <position position="382"/>
    </location>
</feature>
<evidence type="ECO:0000250" key="1"/>
<evidence type="ECO:0000255" key="2">
    <source>
        <dbReference type="PROSITE-ProRule" id="PRU10095"/>
    </source>
</evidence>
<evidence type="ECO:0000305" key="3"/>
<organism>
    <name type="scientific">Lactococcus lactis subsp. lactis</name>
    <name type="common">Streptococcus lactis</name>
    <dbReference type="NCBI Taxonomy" id="1360"/>
    <lineage>
        <taxon>Bacteria</taxon>
        <taxon>Bacillati</taxon>
        <taxon>Bacillota</taxon>
        <taxon>Bacilli</taxon>
        <taxon>Lactobacillales</taxon>
        <taxon>Streptococcaceae</taxon>
        <taxon>Lactococcus</taxon>
    </lineage>
</organism>